<feature type="chain" id="PRO_0000164378" description="5'(3')-deoxyribonucleotidase">
    <location>
        <begin position="1"/>
        <end position="180"/>
    </location>
</feature>
<feature type="active site" description="Nucleophile" evidence="3">
    <location>
        <position position="9"/>
    </location>
</feature>
<feature type="active site" description="Proton donor" evidence="3">
    <location>
        <position position="11"/>
    </location>
</feature>
<feature type="binding site" evidence="1">
    <location>
        <position position="9"/>
    </location>
    <ligand>
        <name>Mg(2+)</name>
        <dbReference type="ChEBI" id="CHEBI:18420"/>
    </ligand>
</feature>
<feature type="binding site" evidence="1">
    <location>
        <position position="11"/>
    </location>
    <ligand>
        <name>Mg(2+)</name>
        <dbReference type="ChEBI" id="CHEBI:18420"/>
    </ligand>
</feature>
<feature type="binding site" evidence="1">
    <location>
        <position position="134"/>
    </location>
    <ligand>
        <name>Mg(2+)</name>
        <dbReference type="ChEBI" id="CHEBI:18420"/>
    </ligand>
</feature>
<organism>
    <name type="scientific">Clostridium acetobutylicum (strain ATCC 824 / DSM 792 / JCM 1419 / IAM 19013 / LMG 5710 / NBRC 13948 / NRRL B-527 / VKM B-1787 / 2291 / W)</name>
    <dbReference type="NCBI Taxonomy" id="272562"/>
    <lineage>
        <taxon>Bacteria</taxon>
        <taxon>Bacillati</taxon>
        <taxon>Bacillota</taxon>
        <taxon>Clostridia</taxon>
        <taxon>Eubacteriales</taxon>
        <taxon>Clostridiaceae</taxon>
        <taxon>Clostridium</taxon>
    </lineage>
</organism>
<comment type="function">
    <text evidence="2">Dephosphorylates nucleoside monophosphates such as the 5' and 2'(3')-phosphates of deoxyribonucleotides in vitro.</text>
</comment>
<comment type="cofactor">
    <cofactor evidence="2">
        <name>Mg(2+)</name>
        <dbReference type="ChEBI" id="CHEBI:18420"/>
    </cofactor>
</comment>
<comment type="similarity">
    <text evidence="3">Belongs to the 5'(3')-deoxyribonucleotidase family.</text>
</comment>
<accession>Q97JQ5</accession>
<keyword id="KW-0378">Hydrolase</keyword>
<keyword id="KW-0460">Magnesium</keyword>
<keyword id="KW-0479">Metal-binding</keyword>
<keyword id="KW-1185">Reference proteome</keyword>
<evidence type="ECO:0000250" key="1">
    <source>
        <dbReference type="UniProtKB" id="Q8CTG7"/>
    </source>
</evidence>
<evidence type="ECO:0000269" key="2">
    <source>
    </source>
</evidence>
<evidence type="ECO:0000305" key="3"/>
<evidence type="ECO:0000305" key="4">
    <source>
    </source>
</evidence>
<sequence>MNKPTLGIDLDTTLNTLDREWVKRYNEIYKDKLLPSDIKGWDIENYVKPECGKKIYDILKEPHFFRNLGVQPFAETALEELTSIFNIYIVSATHYKVCEDKGNWIKEKFPFISYQNIIFCHNKGLVHLDILIDDNPLNLENFKGNKILFDAHHNKSENRFVRARDWYEAKALCESLKDFL</sequence>
<reference key="1">
    <citation type="journal article" date="2001" name="J. Bacteriol.">
        <title>Genome sequence and comparative analysis of the solvent-producing bacterium Clostridium acetobutylicum.</title>
        <authorList>
            <person name="Noelling J."/>
            <person name="Breton G."/>
            <person name="Omelchenko M.V."/>
            <person name="Makarova K.S."/>
            <person name="Zeng Q."/>
            <person name="Gibson R."/>
            <person name="Lee H.M."/>
            <person name="Dubois J."/>
            <person name="Qiu D."/>
            <person name="Hitti J."/>
            <person name="Wolf Y.I."/>
            <person name="Tatusov R.L."/>
            <person name="Sabathe F."/>
            <person name="Doucette-Stamm L.A."/>
            <person name="Soucaille P."/>
            <person name="Daly M.J."/>
            <person name="Bennett G.N."/>
            <person name="Koonin E.V."/>
            <person name="Smith D.R."/>
        </authorList>
    </citation>
    <scope>NUCLEOTIDE SEQUENCE [LARGE SCALE GENOMIC DNA]</scope>
    <source>
        <strain>ATCC 824 / DSM 792 / JCM 1419 / IAM 19013 / LMG 5710 / NBRC 13948 / NRRL B-527 / VKM B-1787 / 2291 / W</strain>
    </source>
</reference>
<reference key="2">
    <citation type="journal article" date="2015" name="Proc. Natl. Acad. Sci. U.S.A.">
        <title>Panoramic view of a superfamily of phosphatases through substrate profiling.</title>
        <authorList>
            <person name="Huang H."/>
            <person name="Pandya C."/>
            <person name="Liu C."/>
            <person name="Al-Obaidi N.F."/>
            <person name="Wang M."/>
            <person name="Zheng L."/>
            <person name="Toews Keating S."/>
            <person name="Aono M."/>
            <person name="Love J.D."/>
            <person name="Evans B."/>
            <person name="Seidel R.D."/>
            <person name="Hillerich B.S."/>
            <person name="Garforth S.J."/>
            <person name="Almo S.C."/>
            <person name="Mariano P.S."/>
            <person name="Dunaway-Mariano D."/>
            <person name="Allen K.N."/>
            <person name="Farelli J.D."/>
        </authorList>
    </citation>
    <scope>FUNCTION</scope>
    <scope>COFACTOR</scope>
</reference>
<dbReference type="EC" id="3.1.3.-" evidence="4"/>
<dbReference type="EMBL" id="AE001437">
    <property type="protein sequence ID" value="AAK79190.1"/>
    <property type="molecule type" value="Genomic_DNA"/>
</dbReference>
<dbReference type="PIR" id="C97050">
    <property type="entry name" value="C97050"/>
</dbReference>
<dbReference type="RefSeq" id="NP_347850.1">
    <property type="nucleotide sequence ID" value="NC_003030.1"/>
</dbReference>
<dbReference type="RefSeq" id="WP_010964531.1">
    <property type="nucleotide sequence ID" value="NC_003030.1"/>
</dbReference>
<dbReference type="SMR" id="Q97JQ5"/>
<dbReference type="STRING" id="272562.CA_C1218"/>
<dbReference type="DNASU" id="1117401"/>
<dbReference type="KEGG" id="cac:CA_C1218"/>
<dbReference type="PATRIC" id="fig|272562.8.peg.1420"/>
<dbReference type="eggNOG" id="COG4502">
    <property type="taxonomic scope" value="Bacteria"/>
</dbReference>
<dbReference type="HOGENOM" id="CLU_111510_0_0_9"/>
<dbReference type="OrthoDB" id="278110at2"/>
<dbReference type="Proteomes" id="UP000000814">
    <property type="component" value="Chromosome"/>
</dbReference>
<dbReference type="GO" id="GO:0008253">
    <property type="term" value="F:5'-nucleotidase activity"/>
    <property type="evidence" value="ECO:0007669"/>
    <property type="project" value="InterPro"/>
</dbReference>
<dbReference type="GO" id="GO:0046872">
    <property type="term" value="F:metal ion binding"/>
    <property type="evidence" value="ECO:0007669"/>
    <property type="project" value="UniProtKB-KW"/>
</dbReference>
<dbReference type="GO" id="GO:0009223">
    <property type="term" value="P:pyrimidine deoxyribonucleotide catabolic process"/>
    <property type="evidence" value="ECO:0007669"/>
    <property type="project" value="TreeGrafter"/>
</dbReference>
<dbReference type="CDD" id="cd02587">
    <property type="entry name" value="HAD_5-3dNT"/>
    <property type="match status" value="1"/>
</dbReference>
<dbReference type="Gene3D" id="1.10.40.40">
    <property type="entry name" value="Deoxyribonucleotidase, domain 2"/>
    <property type="match status" value="1"/>
</dbReference>
<dbReference type="Gene3D" id="3.40.50.1000">
    <property type="entry name" value="HAD superfamily/HAD-like"/>
    <property type="match status" value="1"/>
</dbReference>
<dbReference type="InterPro" id="IPR010708">
    <property type="entry name" value="5'(3')-deoxyribonucleotidase"/>
</dbReference>
<dbReference type="InterPro" id="IPR036412">
    <property type="entry name" value="HAD-like_sf"/>
</dbReference>
<dbReference type="InterPro" id="IPR023214">
    <property type="entry name" value="HAD_sf"/>
</dbReference>
<dbReference type="PANTHER" id="PTHR16504">
    <property type="entry name" value="5'(3')-DEOXYRIBONUCLEOTIDASE"/>
    <property type="match status" value="1"/>
</dbReference>
<dbReference type="PANTHER" id="PTHR16504:SF4">
    <property type="entry name" value="5'(3')-DEOXYRIBONUCLEOTIDASE"/>
    <property type="match status" value="1"/>
</dbReference>
<dbReference type="Pfam" id="PF06941">
    <property type="entry name" value="NT5C"/>
    <property type="match status" value="1"/>
</dbReference>
<dbReference type="SFLD" id="SFLDG01146">
    <property type="entry name" value="C1.2.2"/>
    <property type="match status" value="1"/>
</dbReference>
<dbReference type="SFLD" id="SFLDG01126">
    <property type="entry name" value="C1.2:_Nucleotidase_Like"/>
    <property type="match status" value="1"/>
</dbReference>
<dbReference type="SUPFAM" id="SSF56784">
    <property type="entry name" value="HAD-like"/>
    <property type="match status" value="1"/>
</dbReference>
<gene>
    <name type="ordered locus">CA_C1218</name>
</gene>
<proteinExistence type="inferred from homology"/>
<name>53DR_CLOAB</name>
<protein>
    <recommendedName>
        <fullName evidence="4">5'(3')-deoxyribonucleotidase</fullName>
        <ecNumber evidence="4">3.1.3.-</ecNumber>
    </recommendedName>
</protein>